<dbReference type="EC" id="4.1.1.11" evidence="1"/>
<dbReference type="EMBL" id="CR543861">
    <property type="protein sequence ID" value="CAG69629.1"/>
    <property type="molecule type" value="Genomic_DNA"/>
</dbReference>
<dbReference type="RefSeq" id="WP_004929456.1">
    <property type="nucleotide sequence ID" value="NC_005966.1"/>
</dbReference>
<dbReference type="SMR" id="Q6F8I6"/>
<dbReference type="STRING" id="202950.GCA_001485005_02896"/>
<dbReference type="GeneID" id="45235144"/>
<dbReference type="KEGG" id="aci:ACIAD2911"/>
<dbReference type="eggNOG" id="COG0853">
    <property type="taxonomic scope" value="Bacteria"/>
</dbReference>
<dbReference type="HOGENOM" id="CLU_115305_2_1_6"/>
<dbReference type="OrthoDB" id="9803983at2"/>
<dbReference type="BioCyc" id="ASP62977:ACIAD_RS13145-MONOMER"/>
<dbReference type="UniPathway" id="UPA00028">
    <property type="reaction ID" value="UER00002"/>
</dbReference>
<dbReference type="Proteomes" id="UP000000430">
    <property type="component" value="Chromosome"/>
</dbReference>
<dbReference type="GO" id="GO:0005829">
    <property type="term" value="C:cytosol"/>
    <property type="evidence" value="ECO:0007669"/>
    <property type="project" value="TreeGrafter"/>
</dbReference>
<dbReference type="GO" id="GO:0004068">
    <property type="term" value="F:aspartate 1-decarboxylase activity"/>
    <property type="evidence" value="ECO:0007669"/>
    <property type="project" value="UniProtKB-UniRule"/>
</dbReference>
<dbReference type="GO" id="GO:0006523">
    <property type="term" value="P:alanine biosynthetic process"/>
    <property type="evidence" value="ECO:0007669"/>
    <property type="project" value="InterPro"/>
</dbReference>
<dbReference type="GO" id="GO:0015940">
    <property type="term" value="P:pantothenate biosynthetic process"/>
    <property type="evidence" value="ECO:0007669"/>
    <property type="project" value="UniProtKB-UniRule"/>
</dbReference>
<dbReference type="CDD" id="cd06919">
    <property type="entry name" value="Asp_decarbox"/>
    <property type="match status" value="1"/>
</dbReference>
<dbReference type="Gene3D" id="2.40.40.20">
    <property type="match status" value="1"/>
</dbReference>
<dbReference type="HAMAP" id="MF_00446">
    <property type="entry name" value="PanD"/>
    <property type="match status" value="1"/>
</dbReference>
<dbReference type="InterPro" id="IPR009010">
    <property type="entry name" value="Asp_de-COase-like_dom_sf"/>
</dbReference>
<dbReference type="InterPro" id="IPR003190">
    <property type="entry name" value="Asp_decarbox"/>
</dbReference>
<dbReference type="NCBIfam" id="TIGR00223">
    <property type="entry name" value="panD"/>
    <property type="match status" value="1"/>
</dbReference>
<dbReference type="PANTHER" id="PTHR21012">
    <property type="entry name" value="ASPARTATE 1-DECARBOXYLASE"/>
    <property type="match status" value="1"/>
</dbReference>
<dbReference type="PANTHER" id="PTHR21012:SF0">
    <property type="entry name" value="ASPARTATE 1-DECARBOXYLASE"/>
    <property type="match status" value="1"/>
</dbReference>
<dbReference type="Pfam" id="PF02261">
    <property type="entry name" value="Asp_decarbox"/>
    <property type="match status" value="1"/>
</dbReference>
<dbReference type="PIRSF" id="PIRSF006246">
    <property type="entry name" value="Asp_decarbox"/>
    <property type="match status" value="1"/>
</dbReference>
<dbReference type="SUPFAM" id="SSF50692">
    <property type="entry name" value="ADC-like"/>
    <property type="match status" value="1"/>
</dbReference>
<proteinExistence type="inferred from homology"/>
<sequence length="126" mass="13779">MLSRLLKCKIHRAVVTHAELHYEGSCAIDGVLMDLAGIREYEEIHVWNVTNGKRFTTYAIRGEDHSGIISVNGGAAHQAEVGDLVIIATFGDFTEVEANAHKPRLVYANPDNTVNHTANCIPVQVA</sequence>
<gene>
    <name evidence="1" type="primary">panD</name>
    <name type="ordered locus">ACIAD2911</name>
</gene>
<accession>Q6F8I6</accession>
<name>PAND_ACIAD</name>
<protein>
    <recommendedName>
        <fullName evidence="1">Aspartate 1-decarboxylase</fullName>
        <ecNumber evidence="1">4.1.1.11</ecNumber>
    </recommendedName>
    <alternativeName>
        <fullName evidence="1">Aspartate alpha-decarboxylase</fullName>
    </alternativeName>
    <component>
        <recommendedName>
            <fullName evidence="1">Aspartate 1-decarboxylase beta chain</fullName>
        </recommendedName>
    </component>
    <component>
        <recommendedName>
            <fullName evidence="1">Aspartate 1-decarboxylase alpha chain</fullName>
        </recommendedName>
    </component>
</protein>
<reference key="1">
    <citation type="journal article" date="2004" name="Nucleic Acids Res.">
        <title>Unique features revealed by the genome sequence of Acinetobacter sp. ADP1, a versatile and naturally transformation competent bacterium.</title>
        <authorList>
            <person name="Barbe V."/>
            <person name="Vallenet D."/>
            <person name="Fonknechten N."/>
            <person name="Kreimeyer A."/>
            <person name="Oztas S."/>
            <person name="Labarre L."/>
            <person name="Cruveiller S."/>
            <person name="Robert C."/>
            <person name="Duprat S."/>
            <person name="Wincker P."/>
            <person name="Ornston L.N."/>
            <person name="Weissenbach J."/>
            <person name="Marliere P."/>
            <person name="Cohen G.N."/>
            <person name="Medigue C."/>
        </authorList>
    </citation>
    <scope>NUCLEOTIDE SEQUENCE [LARGE SCALE GENOMIC DNA]</scope>
    <source>
        <strain>ATCC 33305 / BD413 / ADP1</strain>
    </source>
</reference>
<feature type="chain" id="PRO_0000023007" description="Aspartate 1-decarboxylase beta chain" evidence="1">
    <location>
        <begin position="1"/>
        <end position="24"/>
    </location>
</feature>
<feature type="chain" id="PRO_0000023008" description="Aspartate 1-decarboxylase alpha chain" evidence="1">
    <location>
        <begin position="25"/>
        <end position="126"/>
    </location>
</feature>
<feature type="active site" description="Schiff-base intermediate with substrate; via pyruvic acid" evidence="1">
    <location>
        <position position="25"/>
    </location>
</feature>
<feature type="active site" description="Proton donor" evidence="1">
    <location>
        <position position="58"/>
    </location>
</feature>
<feature type="binding site" evidence="1">
    <location>
        <position position="57"/>
    </location>
    <ligand>
        <name>substrate</name>
    </ligand>
</feature>
<feature type="binding site" evidence="1">
    <location>
        <begin position="73"/>
        <end position="75"/>
    </location>
    <ligand>
        <name>substrate</name>
    </ligand>
</feature>
<feature type="modified residue" description="Pyruvic acid (Ser)" evidence="1">
    <location>
        <position position="25"/>
    </location>
</feature>
<organism>
    <name type="scientific">Acinetobacter baylyi (strain ATCC 33305 / BD413 / ADP1)</name>
    <dbReference type="NCBI Taxonomy" id="62977"/>
    <lineage>
        <taxon>Bacteria</taxon>
        <taxon>Pseudomonadati</taxon>
        <taxon>Pseudomonadota</taxon>
        <taxon>Gammaproteobacteria</taxon>
        <taxon>Moraxellales</taxon>
        <taxon>Moraxellaceae</taxon>
        <taxon>Acinetobacter</taxon>
    </lineage>
</organism>
<evidence type="ECO:0000255" key="1">
    <source>
        <dbReference type="HAMAP-Rule" id="MF_00446"/>
    </source>
</evidence>
<comment type="function">
    <text evidence="1">Catalyzes the pyruvoyl-dependent decarboxylation of aspartate to produce beta-alanine.</text>
</comment>
<comment type="catalytic activity">
    <reaction evidence="1">
        <text>L-aspartate + H(+) = beta-alanine + CO2</text>
        <dbReference type="Rhea" id="RHEA:19497"/>
        <dbReference type="ChEBI" id="CHEBI:15378"/>
        <dbReference type="ChEBI" id="CHEBI:16526"/>
        <dbReference type="ChEBI" id="CHEBI:29991"/>
        <dbReference type="ChEBI" id="CHEBI:57966"/>
        <dbReference type="EC" id="4.1.1.11"/>
    </reaction>
</comment>
<comment type="cofactor">
    <cofactor evidence="1">
        <name>pyruvate</name>
        <dbReference type="ChEBI" id="CHEBI:15361"/>
    </cofactor>
    <text evidence="1">Binds 1 pyruvoyl group covalently per subunit.</text>
</comment>
<comment type="pathway">
    <text evidence="1">Cofactor biosynthesis; (R)-pantothenate biosynthesis; beta-alanine from L-aspartate: step 1/1.</text>
</comment>
<comment type="subunit">
    <text evidence="1">Heterooctamer of four alpha and four beta subunits.</text>
</comment>
<comment type="subcellular location">
    <subcellularLocation>
        <location evidence="1">Cytoplasm</location>
    </subcellularLocation>
</comment>
<comment type="PTM">
    <text evidence="1">Is synthesized initially as an inactive proenzyme, which is activated by self-cleavage at a specific serine bond to produce a beta-subunit with a hydroxyl group at its C-terminus and an alpha-subunit with a pyruvoyl group at its N-terminus.</text>
</comment>
<comment type="similarity">
    <text evidence="1">Belongs to the PanD family.</text>
</comment>
<keyword id="KW-0068">Autocatalytic cleavage</keyword>
<keyword id="KW-0963">Cytoplasm</keyword>
<keyword id="KW-0210">Decarboxylase</keyword>
<keyword id="KW-0456">Lyase</keyword>
<keyword id="KW-0566">Pantothenate biosynthesis</keyword>
<keyword id="KW-0670">Pyruvate</keyword>
<keyword id="KW-0704">Schiff base</keyword>
<keyword id="KW-0865">Zymogen</keyword>